<protein>
    <recommendedName>
        <fullName evidence="1">Large ribosomal subunit protein bL32</fullName>
    </recommendedName>
    <alternativeName>
        <fullName evidence="3">50S ribosomal protein L32</fullName>
    </alternativeName>
</protein>
<organism>
    <name type="scientific">Escherichia coli O45:K1 (strain S88 / ExPEC)</name>
    <dbReference type="NCBI Taxonomy" id="585035"/>
    <lineage>
        <taxon>Bacteria</taxon>
        <taxon>Pseudomonadati</taxon>
        <taxon>Pseudomonadota</taxon>
        <taxon>Gammaproteobacteria</taxon>
        <taxon>Enterobacterales</taxon>
        <taxon>Enterobacteriaceae</taxon>
        <taxon>Escherichia</taxon>
    </lineage>
</organism>
<dbReference type="EMBL" id="CU928161">
    <property type="protein sequence ID" value="CAR02429.1"/>
    <property type="molecule type" value="Genomic_DNA"/>
</dbReference>
<dbReference type="RefSeq" id="WP_000290727.1">
    <property type="nucleotide sequence ID" value="NC_011742.1"/>
</dbReference>
<dbReference type="EMDB" id="EMD-7970"/>
<dbReference type="EMDB" id="EMD-8826"/>
<dbReference type="EMDB" id="EMD-8829"/>
<dbReference type="SMR" id="B7MJ76"/>
<dbReference type="IntAct" id="B7MJ76">
    <property type="interactions" value="1"/>
</dbReference>
<dbReference type="GeneID" id="93776319"/>
<dbReference type="KEGG" id="ecz:ECS88_1103"/>
<dbReference type="HOGENOM" id="CLU_129084_2_1_6"/>
<dbReference type="Proteomes" id="UP000000747">
    <property type="component" value="Chromosome"/>
</dbReference>
<dbReference type="GO" id="GO:0015934">
    <property type="term" value="C:large ribosomal subunit"/>
    <property type="evidence" value="ECO:0007669"/>
    <property type="project" value="InterPro"/>
</dbReference>
<dbReference type="GO" id="GO:0003735">
    <property type="term" value="F:structural constituent of ribosome"/>
    <property type="evidence" value="ECO:0007669"/>
    <property type="project" value="InterPro"/>
</dbReference>
<dbReference type="GO" id="GO:0006412">
    <property type="term" value="P:translation"/>
    <property type="evidence" value="ECO:0007669"/>
    <property type="project" value="UniProtKB-UniRule"/>
</dbReference>
<dbReference type="HAMAP" id="MF_00340">
    <property type="entry name" value="Ribosomal_bL32"/>
    <property type="match status" value="1"/>
</dbReference>
<dbReference type="InterPro" id="IPR002677">
    <property type="entry name" value="Ribosomal_bL32"/>
</dbReference>
<dbReference type="InterPro" id="IPR044957">
    <property type="entry name" value="Ribosomal_bL32_bact"/>
</dbReference>
<dbReference type="InterPro" id="IPR011332">
    <property type="entry name" value="Ribosomal_zn-bd"/>
</dbReference>
<dbReference type="NCBIfam" id="TIGR01031">
    <property type="entry name" value="rpmF_bact"/>
    <property type="match status" value="1"/>
</dbReference>
<dbReference type="PANTHER" id="PTHR35534">
    <property type="entry name" value="50S RIBOSOMAL PROTEIN L32"/>
    <property type="match status" value="1"/>
</dbReference>
<dbReference type="PANTHER" id="PTHR35534:SF1">
    <property type="entry name" value="LARGE RIBOSOMAL SUBUNIT PROTEIN BL32"/>
    <property type="match status" value="1"/>
</dbReference>
<dbReference type="Pfam" id="PF01783">
    <property type="entry name" value="Ribosomal_L32p"/>
    <property type="match status" value="1"/>
</dbReference>
<dbReference type="SUPFAM" id="SSF57829">
    <property type="entry name" value="Zn-binding ribosomal proteins"/>
    <property type="match status" value="1"/>
</dbReference>
<comment type="similarity">
    <text evidence="1">Belongs to the bacterial ribosomal protein bL32 family.</text>
</comment>
<reference key="1">
    <citation type="journal article" date="2009" name="PLoS Genet.">
        <title>Organised genome dynamics in the Escherichia coli species results in highly diverse adaptive paths.</title>
        <authorList>
            <person name="Touchon M."/>
            <person name="Hoede C."/>
            <person name="Tenaillon O."/>
            <person name="Barbe V."/>
            <person name="Baeriswyl S."/>
            <person name="Bidet P."/>
            <person name="Bingen E."/>
            <person name="Bonacorsi S."/>
            <person name="Bouchier C."/>
            <person name="Bouvet O."/>
            <person name="Calteau A."/>
            <person name="Chiapello H."/>
            <person name="Clermont O."/>
            <person name="Cruveiller S."/>
            <person name="Danchin A."/>
            <person name="Diard M."/>
            <person name="Dossat C."/>
            <person name="Karoui M.E."/>
            <person name="Frapy E."/>
            <person name="Garry L."/>
            <person name="Ghigo J.M."/>
            <person name="Gilles A.M."/>
            <person name="Johnson J."/>
            <person name="Le Bouguenec C."/>
            <person name="Lescat M."/>
            <person name="Mangenot S."/>
            <person name="Martinez-Jehanne V."/>
            <person name="Matic I."/>
            <person name="Nassif X."/>
            <person name="Oztas S."/>
            <person name="Petit M.A."/>
            <person name="Pichon C."/>
            <person name="Rouy Z."/>
            <person name="Ruf C.S."/>
            <person name="Schneider D."/>
            <person name="Tourret J."/>
            <person name="Vacherie B."/>
            <person name="Vallenet D."/>
            <person name="Medigue C."/>
            <person name="Rocha E.P.C."/>
            <person name="Denamur E."/>
        </authorList>
    </citation>
    <scope>NUCLEOTIDE SEQUENCE [LARGE SCALE GENOMIC DNA]</scope>
    <source>
        <strain>S88 / ExPEC</strain>
    </source>
</reference>
<gene>
    <name evidence="1" type="primary">rpmF</name>
    <name type="ordered locus">ECS88_1103</name>
</gene>
<proteinExistence type="inferred from homology"/>
<accession>B7MJ76</accession>
<name>RL32_ECO45</name>
<feature type="chain" id="PRO_1000120116" description="Large ribosomal subunit protein bL32">
    <location>
        <begin position="1"/>
        <end position="57"/>
    </location>
</feature>
<feature type="region of interest" description="Disordered" evidence="2">
    <location>
        <begin position="1"/>
        <end position="38"/>
    </location>
</feature>
<sequence>MAVQQNKPTRSKRGMRRSHDALTAVTSLSVDKTSGEKHLRHHITADGYYRGRKVIAK</sequence>
<keyword id="KW-1185">Reference proteome</keyword>
<keyword id="KW-0687">Ribonucleoprotein</keyword>
<keyword id="KW-0689">Ribosomal protein</keyword>
<evidence type="ECO:0000255" key="1">
    <source>
        <dbReference type="HAMAP-Rule" id="MF_00340"/>
    </source>
</evidence>
<evidence type="ECO:0000256" key="2">
    <source>
        <dbReference type="SAM" id="MobiDB-lite"/>
    </source>
</evidence>
<evidence type="ECO:0000305" key="3"/>